<dbReference type="EMBL" id="U55002">
    <property type="protein sequence ID" value="AAC97554.2"/>
    <property type="status" value="ALT_SEQ"/>
    <property type="molecule type" value="Genomic_RNA"/>
</dbReference>
<dbReference type="RefSeq" id="NP_068344.1">
    <property type="nucleotide sequence ID" value="NC_002598.1"/>
</dbReference>
<dbReference type="KEGG" id="vg:912245"/>
<dbReference type="Proteomes" id="UP000001665">
    <property type="component" value="Segment"/>
</dbReference>
<dbReference type="GO" id="GO:0016020">
    <property type="term" value="C:membrane"/>
    <property type="evidence" value="ECO:0007669"/>
    <property type="project" value="UniProtKB-SubCell"/>
</dbReference>
<dbReference type="GO" id="GO:0046740">
    <property type="term" value="P:transport of virus in host, cell to cell"/>
    <property type="evidence" value="ECO:0007669"/>
    <property type="project" value="UniProtKB-KW"/>
</dbReference>
<organism>
    <name type="scientific">Panicum mosaic virus (strain United States/Kansas 109S)</name>
    <name type="common">PMV</name>
    <dbReference type="NCBI Taxonomy" id="652599"/>
    <lineage>
        <taxon>Viruses</taxon>
        <taxon>Riboviria</taxon>
        <taxon>Orthornavirae</taxon>
        <taxon>Kitrinoviricota</taxon>
        <taxon>Tolucaviricetes</taxon>
        <taxon>Tolivirales</taxon>
        <taxon>Tombusviridae</taxon>
        <taxon>Procedovirinae</taxon>
        <taxon>Panicovirus</taxon>
        <taxon>Panicovirus panici</taxon>
    </lineage>
</organism>
<accession>P89035</accession>
<feature type="chain" id="PRO_0000399492" description="Putative movement protein p6.6">
    <location>
        <begin position="1"/>
        <end position="59"/>
    </location>
</feature>
<feature type="transmembrane region" description="Helical" evidence="1">
    <location>
        <begin position="13"/>
        <end position="35"/>
    </location>
</feature>
<keyword id="KW-0472">Membrane</keyword>
<keyword id="KW-1185">Reference proteome</keyword>
<keyword id="KW-0812">Transmembrane</keyword>
<keyword id="KW-1133">Transmembrane helix</keyword>
<keyword id="KW-0813">Transport</keyword>
<keyword id="KW-0916">Viral movement protein</keyword>
<reference key="1">
    <citation type="journal article" date="1998" name="Virology">
        <title>Nucleotide sequence and infectivity of a full-length cDNA clone of panicum mosaic virus.</title>
        <authorList>
            <person name="Turina M."/>
            <person name="Maruoka M."/>
            <person name="Monis J."/>
            <person name="Jackson A.O."/>
            <person name="Scholthof K.B."/>
        </authorList>
    </citation>
    <scope>NUCLEOTIDE SEQUENCE [GENOMIC RNA]</scope>
</reference>
<reference key="2">
    <citation type="journal article" date="2000" name="Virology">
        <title>A gene cluster encoded by panicum mosaic virus is associated with virus movement.</title>
        <authorList>
            <person name="Turina M."/>
            <person name="Desvoyes B."/>
            <person name="Scholthof K.B."/>
        </authorList>
    </citation>
    <scope>CHARACTERIZATION</scope>
</reference>
<comment type="function">
    <text evidence="2">Cell-to-cell movement.</text>
</comment>
<comment type="subcellular location">
    <subcellularLocation>
        <location evidence="2">Membrane</location>
        <topology evidence="2">Single-pass membrane protein</topology>
    </subcellularLocation>
</comment>
<comment type="caution">
    <text evidence="2">The putative 14.6-kDa frameshift protein (p8-FS) cited in PubMed:9454725 has not been detected by in vitro translation assays in PubMed:10612666. A 6.6 kDa product corresponding to the same product without the N-terminus shared with p8 seems to be encoded instead in the same region.</text>
</comment>
<comment type="caution">
    <text evidence="2">Starts with an unusual GUG codon.</text>
</comment>
<comment type="sequence caution" evidence="2">
    <conflict type="miscellaneous discrepancy">
        <sequence resource="EMBL-CDS" id="AAC97554"/>
    </conflict>
</comment>
<gene>
    <name type="ORF">ORF2bis</name>
</gene>
<proteinExistence type="evidence at protein level"/>
<name>MP6_PMVK</name>
<protein>
    <recommendedName>
        <fullName>Putative movement protein p6.6</fullName>
    </recommendedName>
</protein>
<organismHost>
    <name type="scientific">Muhlenbergia</name>
    <dbReference type="NCBI Taxonomy" id="58090"/>
</organismHost>
<organismHost>
    <name type="scientific">Panicum virgatum</name>
    <name type="common">Blackwell switchgrass</name>
    <dbReference type="NCBI Taxonomy" id="38727"/>
</organismHost>
<evidence type="ECO:0000255" key="1"/>
<evidence type="ECO:0000305" key="2"/>
<sequence length="59" mass="6797">MATGKCYCPEDPRVGPLLVLCLLLLLILFSRSWNVAPVVVPSYHTVYHHEKYQNIEIQK</sequence>